<feature type="chain" id="PRO_0000207009" description="Exodeoxyribonuclease 7 small subunit">
    <location>
        <begin position="1"/>
        <end position="76"/>
    </location>
</feature>
<protein>
    <recommendedName>
        <fullName evidence="1">Exodeoxyribonuclease 7 small subunit</fullName>
        <ecNumber evidence="1">3.1.11.6</ecNumber>
    </recommendedName>
    <alternativeName>
        <fullName evidence="1">Exodeoxyribonuclease VII small subunit</fullName>
        <shortName evidence="1">Exonuclease VII small subunit</shortName>
    </alternativeName>
</protein>
<sequence length="76" mass="8747">MSKEKQSFEEMMKELENIVQKLDNEAVSLEESLDLYQRGMKLSANCDSTLKEAEKKVNELMQEEVGDKGNEETTDE</sequence>
<organism>
    <name type="scientific">Staphylococcus epidermidis (strain ATCC 12228 / FDA PCI 1200)</name>
    <dbReference type="NCBI Taxonomy" id="176280"/>
    <lineage>
        <taxon>Bacteria</taxon>
        <taxon>Bacillati</taxon>
        <taxon>Bacillota</taxon>
        <taxon>Bacilli</taxon>
        <taxon>Bacillales</taxon>
        <taxon>Staphylococcaceae</taxon>
        <taxon>Staphylococcus</taxon>
    </lineage>
</organism>
<proteinExistence type="inferred from homology"/>
<evidence type="ECO:0000255" key="1">
    <source>
        <dbReference type="HAMAP-Rule" id="MF_00337"/>
    </source>
</evidence>
<comment type="function">
    <text evidence="1">Bidirectionally degrades single-stranded DNA into large acid-insoluble oligonucleotides, which are then degraded further into small acid-soluble oligonucleotides.</text>
</comment>
<comment type="catalytic activity">
    <reaction evidence="1">
        <text>Exonucleolytic cleavage in either 5'- to 3'- or 3'- to 5'-direction to yield nucleoside 5'-phosphates.</text>
        <dbReference type="EC" id="3.1.11.6"/>
    </reaction>
</comment>
<comment type="subunit">
    <text evidence="1">Heterooligomer composed of large and small subunits.</text>
</comment>
<comment type="subcellular location">
    <subcellularLocation>
        <location evidence="1">Cytoplasm</location>
    </subcellularLocation>
</comment>
<comment type="similarity">
    <text evidence="1">Belongs to the XseB family.</text>
</comment>
<gene>
    <name evidence="1" type="primary">xseB</name>
    <name type="ordered locus">SE_1203</name>
</gene>
<name>EX7S_STAES</name>
<dbReference type="EC" id="3.1.11.6" evidence="1"/>
<dbReference type="EMBL" id="AE015929">
    <property type="protein sequence ID" value="AAO04802.1"/>
    <property type="molecule type" value="Genomic_DNA"/>
</dbReference>
<dbReference type="RefSeq" id="NP_764758.1">
    <property type="nucleotide sequence ID" value="NC_004461.1"/>
</dbReference>
<dbReference type="RefSeq" id="WP_001830935.1">
    <property type="nucleotide sequence ID" value="NZ_WBME01000006.1"/>
</dbReference>
<dbReference type="SMR" id="Q8CP39"/>
<dbReference type="KEGG" id="sep:SE_1203"/>
<dbReference type="PATRIC" id="fig|176280.10.peg.1173"/>
<dbReference type="eggNOG" id="COG1722">
    <property type="taxonomic scope" value="Bacteria"/>
</dbReference>
<dbReference type="HOGENOM" id="CLU_145918_3_2_9"/>
<dbReference type="OrthoDB" id="9798666at2"/>
<dbReference type="Proteomes" id="UP000001411">
    <property type="component" value="Chromosome"/>
</dbReference>
<dbReference type="GO" id="GO:0005829">
    <property type="term" value="C:cytosol"/>
    <property type="evidence" value="ECO:0007669"/>
    <property type="project" value="TreeGrafter"/>
</dbReference>
<dbReference type="GO" id="GO:0009318">
    <property type="term" value="C:exodeoxyribonuclease VII complex"/>
    <property type="evidence" value="ECO:0007669"/>
    <property type="project" value="InterPro"/>
</dbReference>
<dbReference type="GO" id="GO:0008855">
    <property type="term" value="F:exodeoxyribonuclease VII activity"/>
    <property type="evidence" value="ECO:0007669"/>
    <property type="project" value="UniProtKB-UniRule"/>
</dbReference>
<dbReference type="GO" id="GO:0006308">
    <property type="term" value="P:DNA catabolic process"/>
    <property type="evidence" value="ECO:0007669"/>
    <property type="project" value="UniProtKB-UniRule"/>
</dbReference>
<dbReference type="Gene3D" id="1.10.287.1040">
    <property type="entry name" value="Exonuclease VII, small subunit"/>
    <property type="match status" value="1"/>
</dbReference>
<dbReference type="HAMAP" id="MF_00337">
    <property type="entry name" value="Exonuc_7_S"/>
    <property type="match status" value="1"/>
</dbReference>
<dbReference type="InterPro" id="IPR003761">
    <property type="entry name" value="Exonuc_VII_S"/>
</dbReference>
<dbReference type="InterPro" id="IPR037004">
    <property type="entry name" value="Exonuc_VII_ssu_sf"/>
</dbReference>
<dbReference type="NCBIfam" id="NF002140">
    <property type="entry name" value="PRK00977.1-4"/>
    <property type="match status" value="1"/>
</dbReference>
<dbReference type="NCBIfam" id="NF010671">
    <property type="entry name" value="PRK14068.1"/>
    <property type="match status" value="1"/>
</dbReference>
<dbReference type="NCBIfam" id="TIGR01280">
    <property type="entry name" value="xseB"/>
    <property type="match status" value="1"/>
</dbReference>
<dbReference type="PANTHER" id="PTHR34137">
    <property type="entry name" value="EXODEOXYRIBONUCLEASE 7 SMALL SUBUNIT"/>
    <property type="match status" value="1"/>
</dbReference>
<dbReference type="PANTHER" id="PTHR34137:SF1">
    <property type="entry name" value="EXODEOXYRIBONUCLEASE 7 SMALL SUBUNIT"/>
    <property type="match status" value="1"/>
</dbReference>
<dbReference type="Pfam" id="PF02609">
    <property type="entry name" value="Exonuc_VII_S"/>
    <property type="match status" value="1"/>
</dbReference>
<dbReference type="PIRSF" id="PIRSF006488">
    <property type="entry name" value="Exonuc_VII_S"/>
    <property type="match status" value="1"/>
</dbReference>
<dbReference type="SUPFAM" id="SSF116842">
    <property type="entry name" value="XseB-like"/>
    <property type="match status" value="1"/>
</dbReference>
<keyword id="KW-0963">Cytoplasm</keyword>
<keyword id="KW-0269">Exonuclease</keyword>
<keyword id="KW-0378">Hydrolase</keyword>
<keyword id="KW-0540">Nuclease</keyword>
<reference key="1">
    <citation type="journal article" date="2003" name="Mol. Microbiol.">
        <title>Genome-based analysis of virulence genes in a non-biofilm-forming Staphylococcus epidermidis strain (ATCC 12228).</title>
        <authorList>
            <person name="Zhang Y.-Q."/>
            <person name="Ren S.-X."/>
            <person name="Li H.-L."/>
            <person name="Wang Y.-X."/>
            <person name="Fu G."/>
            <person name="Yang J."/>
            <person name="Qin Z.-Q."/>
            <person name="Miao Y.-G."/>
            <person name="Wang W.-Y."/>
            <person name="Chen R.-S."/>
            <person name="Shen Y."/>
            <person name="Chen Z."/>
            <person name="Yuan Z.-H."/>
            <person name="Zhao G.-P."/>
            <person name="Qu D."/>
            <person name="Danchin A."/>
            <person name="Wen Y.-M."/>
        </authorList>
    </citation>
    <scope>NUCLEOTIDE SEQUENCE [LARGE SCALE GENOMIC DNA]</scope>
    <source>
        <strain>ATCC 12228 / FDA PCI 1200</strain>
    </source>
</reference>
<accession>Q8CP39</accession>